<name>RUVB_BRUSI</name>
<organism>
    <name type="scientific">Brucella suis (strain ATCC 23445 / NCTC 10510)</name>
    <dbReference type="NCBI Taxonomy" id="470137"/>
    <lineage>
        <taxon>Bacteria</taxon>
        <taxon>Pseudomonadati</taxon>
        <taxon>Pseudomonadota</taxon>
        <taxon>Alphaproteobacteria</taxon>
        <taxon>Hyphomicrobiales</taxon>
        <taxon>Brucellaceae</taxon>
        <taxon>Brucella/Ochrobactrum group</taxon>
        <taxon>Brucella</taxon>
    </lineage>
</organism>
<protein>
    <recommendedName>
        <fullName evidence="1">Holliday junction branch migration complex subunit RuvB</fullName>
        <ecNumber evidence="1">3.6.4.-</ecNumber>
    </recommendedName>
</protein>
<proteinExistence type="inferred from homology"/>
<keyword id="KW-0067">ATP-binding</keyword>
<keyword id="KW-0963">Cytoplasm</keyword>
<keyword id="KW-0227">DNA damage</keyword>
<keyword id="KW-0233">DNA recombination</keyword>
<keyword id="KW-0234">DNA repair</keyword>
<keyword id="KW-0238">DNA-binding</keyword>
<keyword id="KW-0378">Hydrolase</keyword>
<keyword id="KW-0547">Nucleotide-binding</keyword>
<comment type="function">
    <text evidence="1">The RuvA-RuvB-RuvC complex processes Holliday junction (HJ) DNA during genetic recombination and DNA repair, while the RuvA-RuvB complex plays an important role in the rescue of blocked DNA replication forks via replication fork reversal (RFR). RuvA specifically binds to HJ cruciform DNA, conferring on it an open structure. The RuvB hexamer acts as an ATP-dependent pump, pulling dsDNA into and through the RuvAB complex. RuvB forms 2 homohexamers on either side of HJ DNA bound by 1 or 2 RuvA tetramers; 4 subunits per hexamer contact DNA at a time. Coordinated motions by a converter formed by DNA-disengaged RuvB subunits stimulates ATP hydrolysis and nucleotide exchange. Immobilization of the converter enables RuvB to convert the ATP-contained energy into a lever motion, pulling 2 nucleotides of DNA out of the RuvA tetramer per ATP hydrolyzed, thus driving DNA branch migration. The RuvB motors rotate together with the DNA substrate, which together with the progressing nucleotide cycle form the mechanistic basis for DNA recombination by continuous HJ branch migration. Branch migration allows RuvC to scan DNA until it finds its consensus sequence, where it cleaves and resolves cruciform DNA.</text>
</comment>
<comment type="catalytic activity">
    <reaction evidence="1">
        <text>ATP + H2O = ADP + phosphate + H(+)</text>
        <dbReference type="Rhea" id="RHEA:13065"/>
        <dbReference type="ChEBI" id="CHEBI:15377"/>
        <dbReference type="ChEBI" id="CHEBI:15378"/>
        <dbReference type="ChEBI" id="CHEBI:30616"/>
        <dbReference type="ChEBI" id="CHEBI:43474"/>
        <dbReference type="ChEBI" id="CHEBI:456216"/>
    </reaction>
</comment>
<comment type="subunit">
    <text evidence="1">Homohexamer. Forms an RuvA(8)-RuvB(12)-Holliday junction (HJ) complex. HJ DNA is sandwiched between 2 RuvA tetramers; dsDNA enters through RuvA and exits via RuvB. An RuvB hexamer assembles on each DNA strand where it exits the tetramer. Each RuvB hexamer is contacted by two RuvA subunits (via domain III) on 2 adjacent RuvB subunits; this complex drives branch migration. In the full resolvosome a probable DNA-RuvA(4)-RuvB(12)-RuvC(2) complex forms which resolves the HJ.</text>
</comment>
<comment type="subcellular location">
    <subcellularLocation>
        <location evidence="1">Cytoplasm</location>
    </subcellularLocation>
</comment>
<comment type="domain">
    <text evidence="1">Has 3 domains, the large (RuvB-L) and small ATPase (RuvB-S) domains and the C-terminal head (RuvB-H) domain. The head domain binds DNA, while the ATPase domains jointly bind ATP, ADP or are empty depending on the state of the subunit in the translocation cycle. During a single DNA translocation step the structure of each domain remains the same, but their relative positions change.</text>
</comment>
<comment type="similarity">
    <text evidence="1">Belongs to the RuvB family.</text>
</comment>
<reference key="1">
    <citation type="submission" date="2007-12" db="EMBL/GenBank/DDBJ databases">
        <title>Brucella suis ATCC 23445 whole genome shotgun sequencing project.</title>
        <authorList>
            <person name="Setubal J.C."/>
            <person name="Bowns C."/>
            <person name="Boyle S."/>
            <person name="Crasta O.R."/>
            <person name="Czar M.J."/>
            <person name="Dharmanolla C."/>
            <person name="Gillespie J.J."/>
            <person name="Kenyon R.W."/>
            <person name="Lu J."/>
            <person name="Mane S."/>
            <person name="Mohapatra S."/>
            <person name="Nagrani S."/>
            <person name="Purkayastha A."/>
            <person name="Rajasimha H.K."/>
            <person name="Shallom J.M."/>
            <person name="Shallom S."/>
            <person name="Shukla M."/>
            <person name="Snyder E.E."/>
            <person name="Sobral B.W."/>
            <person name="Wattam A.R."/>
            <person name="Will R."/>
            <person name="Williams K."/>
            <person name="Yoo H."/>
            <person name="Bruce D."/>
            <person name="Detter C."/>
            <person name="Munk C."/>
            <person name="Brettin T.S."/>
        </authorList>
    </citation>
    <scope>NUCLEOTIDE SEQUENCE [LARGE SCALE GENOMIC DNA]</scope>
    <source>
        <strain>ATCC 23445 / NCTC 10510</strain>
    </source>
</reference>
<gene>
    <name evidence="1" type="primary">ruvB</name>
    <name type="ordered locus">BSUIS_B1178</name>
</gene>
<dbReference type="EC" id="3.6.4.-" evidence="1"/>
<dbReference type="EMBL" id="CP000912">
    <property type="protein sequence ID" value="ABY40115.1"/>
    <property type="molecule type" value="Genomic_DNA"/>
</dbReference>
<dbReference type="RefSeq" id="WP_002964791.1">
    <property type="nucleotide sequence ID" value="NC_010167.1"/>
</dbReference>
<dbReference type="SMR" id="A9WWH9"/>
<dbReference type="GeneID" id="97533144"/>
<dbReference type="KEGG" id="bmt:BSUIS_B1178"/>
<dbReference type="HOGENOM" id="CLU_055599_1_0_5"/>
<dbReference type="Proteomes" id="UP000008545">
    <property type="component" value="Chromosome II"/>
</dbReference>
<dbReference type="GO" id="GO:0005737">
    <property type="term" value="C:cytoplasm"/>
    <property type="evidence" value="ECO:0007669"/>
    <property type="project" value="UniProtKB-SubCell"/>
</dbReference>
<dbReference type="GO" id="GO:0048476">
    <property type="term" value="C:Holliday junction resolvase complex"/>
    <property type="evidence" value="ECO:0007669"/>
    <property type="project" value="UniProtKB-UniRule"/>
</dbReference>
<dbReference type="GO" id="GO:0005524">
    <property type="term" value="F:ATP binding"/>
    <property type="evidence" value="ECO:0007669"/>
    <property type="project" value="UniProtKB-UniRule"/>
</dbReference>
<dbReference type="GO" id="GO:0016887">
    <property type="term" value="F:ATP hydrolysis activity"/>
    <property type="evidence" value="ECO:0007669"/>
    <property type="project" value="InterPro"/>
</dbReference>
<dbReference type="GO" id="GO:0000400">
    <property type="term" value="F:four-way junction DNA binding"/>
    <property type="evidence" value="ECO:0007669"/>
    <property type="project" value="UniProtKB-UniRule"/>
</dbReference>
<dbReference type="GO" id="GO:0009378">
    <property type="term" value="F:four-way junction helicase activity"/>
    <property type="evidence" value="ECO:0007669"/>
    <property type="project" value="InterPro"/>
</dbReference>
<dbReference type="GO" id="GO:0006310">
    <property type="term" value="P:DNA recombination"/>
    <property type="evidence" value="ECO:0007669"/>
    <property type="project" value="UniProtKB-UniRule"/>
</dbReference>
<dbReference type="GO" id="GO:0006281">
    <property type="term" value="P:DNA repair"/>
    <property type="evidence" value="ECO:0007669"/>
    <property type="project" value="UniProtKB-UniRule"/>
</dbReference>
<dbReference type="CDD" id="cd00009">
    <property type="entry name" value="AAA"/>
    <property type="match status" value="1"/>
</dbReference>
<dbReference type="Gene3D" id="1.10.8.60">
    <property type="match status" value="1"/>
</dbReference>
<dbReference type="Gene3D" id="3.40.50.300">
    <property type="entry name" value="P-loop containing nucleotide triphosphate hydrolases"/>
    <property type="match status" value="1"/>
</dbReference>
<dbReference type="Gene3D" id="1.10.10.10">
    <property type="entry name" value="Winged helix-like DNA-binding domain superfamily/Winged helix DNA-binding domain"/>
    <property type="match status" value="1"/>
</dbReference>
<dbReference type="HAMAP" id="MF_00016">
    <property type="entry name" value="DNA_HJ_migration_RuvB"/>
    <property type="match status" value="1"/>
</dbReference>
<dbReference type="InterPro" id="IPR003593">
    <property type="entry name" value="AAA+_ATPase"/>
</dbReference>
<dbReference type="InterPro" id="IPR041445">
    <property type="entry name" value="AAA_lid_4"/>
</dbReference>
<dbReference type="InterPro" id="IPR000641">
    <property type="entry name" value="CbxX/CfxQ"/>
</dbReference>
<dbReference type="InterPro" id="IPR004605">
    <property type="entry name" value="DNA_helicase_Holl-junc_RuvB"/>
</dbReference>
<dbReference type="InterPro" id="IPR027417">
    <property type="entry name" value="P-loop_NTPase"/>
</dbReference>
<dbReference type="InterPro" id="IPR008824">
    <property type="entry name" value="RuvB-like_N"/>
</dbReference>
<dbReference type="InterPro" id="IPR008823">
    <property type="entry name" value="RuvB_C"/>
</dbReference>
<dbReference type="InterPro" id="IPR036388">
    <property type="entry name" value="WH-like_DNA-bd_sf"/>
</dbReference>
<dbReference type="InterPro" id="IPR036390">
    <property type="entry name" value="WH_DNA-bd_sf"/>
</dbReference>
<dbReference type="NCBIfam" id="NF000868">
    <property type="entry name" value="PRK00080.1"/>
    <property type="match status" value="1"/>
</dbReference>
<dbReference type="NCBIfam" id="TIGR00635">
    <property type="entry name" value="ruvB"/>
    <property type="match status" value="1"/>
</dbReference>
<dbReference type="PANTHER" id="PTHR42848">
    <property type="match status" value="1"/>
</dbReference>
<dbReference type="PANTHER" id="PTHR42848:SF1">
    <property type="entry name" value="HOLLIDAY JUNCTION BRANCH MIGRATION COMPLEX SUBUNIT RUVB"/>
    <property type="match status" value="1"/>
</dbReference>
<dbReference type="Pfam" id="PF17864">
    <property type="entry name" value="AAA_lid_4"/>
    <property type="match status" value="1"/>
</dbReference>
<dbReference type="Pfam" id="PF05491">
    <property type="entry name" value="RuvB_C"/>
    <property type="match status" value="1"/>
</dbReference>
<dbReference type="Pfam" id="PF05496">
    <property type="entry name" value="RuvB_N"/>
    <property type="match status" value="1"/>
</dbReference>
<dbReference type="PRINTS" id="PR00819">
    <property type="entry name" value="CBXCFQXSUPER"/>
</dbReference>
<dbReference type="SMART" id="SM00382">
    <property type="entry name" value="AAA"/>
    <property type="match status" value="1"/>
</dbReference>
<dbReference type="SUPFAM" id="SSF52540">
    <property type="entry name" value="P-loop containing nucleoside triphosphate hydrolases"/>
    <property type="match status" value="1"/>
</dbReference>
<dbReference type="SUPFAM" id="SSF46785">
    <property type="entry name" value="Winged helix' DNA-binding domain"/>
    <property type="match status" value="1"/>
</dbReference>
<feature type="chain" id="PRO_1000074074" description="Holliday junction branch migration complex subunit RuvB">
    <location>
        <begin position="1"/>
        <end position="346"/>
    </location>
</feature>
<feature type="region of interest" description="Large ATPase domain (RuvB-L)" evidence="1">
    <location>
        <begin position="1"/>
        <end position="181"/>
    </location>
</feature>
<feature type="region of interest" description="Small ATPAse domain (RuvB-S)" evidence="1">
    <location>
        <begin position="182"/>
        <end position="252"/>
    </location>
</feature>
<feature type="region of interest" description="Head domain (RuvB-H)" evidence="1">
    <location>
        <begin position="255"/>
        <end position="346"/>
    </location>
</feature>
<feature type="binding site" evidence="1">
    <location>
        <position position="20"/>
    </location>
    <ligand>
        <name>ATP</name>
        <dbReference type="ChEBI" id="CHEBI:30616"/>
    </ligand>
</feature>
<feature type="binding site" evidence="1">
    <location>
        <position position="21"/>
    </location>
    <ligand>
        <name>ATP</name>
        <dbReference type="ChEBI" id="CHEBI:30616"/>
    </ligand>
</feature>
<feature type="binding site" evidence="1">
    <location>
        <position position="62"/>
    </location>
    <ligand>
        <name>ATP</name>
        <dbReference type="ChEBI" id="CHEBI:30616"/>
    </ligand>
</feature>
<feature type="binding site" evidence="1">
    <location>
        <position position="65"/>
    </location>
    <ligand>
        <name>ATP</name>
        <dbReference type="ChEBI" id="CHEBI:30616"/>
    </ligand>
</feature>
<feature type="binding site" evidence="1">
    <location>
        <position position="66"/>
    </location>
    <ligand>
        <name>ATP</name>
        <dbReference type="ChEBI" id="CHEBI:30616"/>
    </ligand>
</feature>
<feature type="binding site" evidence="1">
    <location>
        <position position="66"/>
    </location>
    <ligand>
        <name>Mg(2+)</name>
        <dbReference type="ChEBI" id="CHEBI:18420"/>
    </ligand>
</feature>
<feature type="binding site" evidence="1">
    <location>
        <position position="67"/>
    </location>
    <ligand>
        <name>ATP</name>
        <dbReference type="ChEBI" id="CHEBI:30616"/>
    </ligand>
</feature>
<feature type="binding site" evidence="1">
    <location>
        <begin position="128"/>
        <end position="130"/>
    </location>
    <ligand>
        <name>ATP</name>
        <dbReference type="ChEBI" id="CHEBI:30616"/>
    </ligand>
</feature>
<feature type="binding site" evidence="1">
    <location>
        <position position="171"/>
    </location>
    <ligand>
        <name>ATP</name>
        <dbReference type="ChEBI" id="CHEBI:30616"/>
    </ligand>
</feature>
<feature type="binding site" evidence="1">
    <location>
        <position position="181"/>
    </location>
    <ligand>
        <name>ATP</name>
        <dbReference type="ChEBI" id="CHEBI:30616"/>
    </ligand>
</feature>
<feature type="binding site" evidence="1">
    <location>
        <position position="218"/>
    </location>
    <ligand>
        <name>ATP</name>
        <dbReference type="ChEBI" id="CHEBI:30616"/>
    </ligand>
</feature>
<feature type="binding site" evidence="1">
    <location>
        <position position="291"/>
    </location>
    <ligand>
        <name>DNA</name>
        <dbReference type="ChEBI" id="CHEBI:16991"/>
    </ligand>
</feature>
<feature type="binding site" evidence="1">
    <location>
        <position position="310"/>
    </location>
    <ligand>
        <name>DNA</name>
        <dbReference type="ChEBI" id="CHEBI:16991"/>
    </ligand>
</feature>
<feature type="binding site" evidence="1">
    <location>
        <position position="315"/>
    </location>
    <ligand>
        <name>DNA</name>
        <dbReference type="ChEBI" id="CHEBI:16991"/>
    </ligand>
</feature>
<accession>A9WWH9</accession>
<sequence length="346" mass="38241">MSDRNPLIDADRRADEDNTLRPQTLDDFVGQAAARANLKVFIEAAKVRGEALDHVLFVGPPGLGKTTLAQIMAKELGVNFRSTSGPVIAKAGDLAALLTNLEERDVLFIDEIHRLSPAVEEILYPAMEDFQLDLIIGEGPAARSVKIDLAKFTLVAATTRLGLLTTPLRDRFGIPVRLNFYTVEELEYIVRRGARIMQMGISSDGAREVARRSRGTPRIAGRLLRRVRDFALVAGADIIDRRIADEALSRLEVDNRGLDQLDRRYLNIIARNFGGGPVGIETIAAGLSEPRDAIEDIIEPYLIQQGFLQRTPRGRVLTAVAWQHLGLPAPAEIIQQSQYGLFMEDE</sequence>
<evidence type="ECO:0000255" key="1">
    <source>
        <dbReference type="HAMAP-Rule" id="MF_00016"/>
    </source>
</evidence>